<name>CLPP_YERE8</name>
<proteinExistence type="inferred from homology"/>
<accession>A1JNN2</accession>
<dbReference type="EC" id="3.4.21.92" evidence="1"/>
<dbReference type="EMBL" id="AM286415">
    <property type="protein sequence ID" value="CAL13169.1"/>
    <property type="molecule type" value="Genomic_DNA"/>
</dbReference>
<dbReference type="RefSeq" id="WP_005167636.1">
    <property type="nucleotide sequence ID" value="NC_008800.1"/>
</dbReference>
<dbReference type="RefSeq" id="YP_001007316.1">
    <property type="nucleotide sequence ID" value="NC_008800.1"/>
</dbReference>
<dbReference type="SMR" id="A1JNN2"/>
<dbReference type="MEROPS" id="S14.001"/>
<dbReference type="GeneID" id="93971815"/>
<dbReference type="KEGG" id="yen:YE3134"/>
<dbReference type="PATRIC" id="fig|393305.7.peg.3338"/>
<dbReference type="eggNOG" id="COG0740">
    <property type="taxonomic scope" value="Bacteria"/>
</dbReference>
<dbReference type="HOGENOM" id="CLU_058707_3_2_6"/>
<dbReference type="OrthoDB" id="9802800at2"/>
<dbReference type="Proteomes" id="UP000000642">
    <property type="component" value="Chromosome"/>
</dbReference>
<dbReference type="GO" id="GO:0005737">
    <property type="term" value="C:cytoplasm"/>
    <property type="evidence" value="ECO:0007669"/>
    <property type="project" value="UniProtKB-SubCell"/>
</dbReference>
<dbReference type="GO" id="GO:0009368">
    <property type="term" value="C:endopeptidase Clp complex"/>
    <property type="evidence" value="ECO:0007669"/>
    <property type="project" value="TreeGrafter"/>
</dbReference>
<dbReference type="GO" id="GO:0004176">
    <property type="term" value="F:ATP-dependent peptidase activity"/>
    <property type="evidence" value="ECO:0007669"/>
    <property type="project" value="InterPro"/>
</dbReference>
<dbReference type="GO" id="GO:0051117">
    <property type="term" value="F:ATPase binding"/>
    <property type="evidence" value="ECO:0007669"/>
    <property type="project" value="TreeGrafter"/>
</dbReference>
<dbReference type="GO" id="GO:0004252">
    <property type="term" value="F:serine-type endopeptidase activity"/>
    <property type="evidence" value="ECO:0007669"/>
    <property type="project" value="UniProtKB-UniRule"/>
</dbReference>
<dbReference type="GO" id="GO:0006515">
    <property type="term" value="P:protein quality control for misfolded or incompletely synthesized proteins"/>
    <property type="evidence" value="ECO:0007669"/>
    <property type="project" value="TreeGrafter"/>
</dbReference>
<dbReference type="CDD" id="cd07017">
    <property type="entry name" value="S14_ClpP_2"/>
    <property type="match status" value="1"/>
</dbReference>
<dbReference type="FunFam" id="3.90.226.10:FF:000001">
    <property type="entry name" value="ATP-dependent Clp protease proteolytic subunit"/>
    <property type="match status" value="1"/>
</dbReference>
<dbReference type="Gene3D" id="3.90.226.10">
    <property type="entry name" value="2-enoyl-CoA Hydratase, Chain A, domain 1"/>
    <property type="match status" value="1"/>
</dbReference>
<dbReference type="HAMAP" id="MF_00444">
    <property type="entry name" value="ClpP"/>
    <property type="match status" value="1"/>
</dbReference>
<dbReference type="InterPro" id="IPR001907">
    <property type="entry name" value="ClpP"/>
</dbReference>
<dbReference type="InterPro" id="IPR029045">
    <property type="entry name" value="ClpP/crotonase-like_dom_sf"/>
</dbReference>
<dbReference type="InterPro" id="IPR023562">
    <property type="entry name" value="ClpP/TepA"/>
</dbReference>
<dbReference type="InterPro" id="IPR033135">
    <property type="entry name" value="ClpP_His_AS"/>
</dbReference>
<dbReference type="InterPro" id="IPR018215">
    <property type="entry name" value="ClpP_Ser_AS"/>
</dbReference>
<dbReference type="NCBIfam" id="TIGR00493">
    <property type="entry name" value="clpP"/>
    <property type="match status" value="1"/>
</dbReference>
<dbReference type="NCBIfam" id="NF001368">
    <property type="entry name" value="PRK00277.1"/>
    <property type="match status" value="1"/>
</dbReference>
<dbReference type="NCBIfam" id="NF009205">
    <property type="entry name" value="PRK12553.1"/>
    <property type="match status" value="1"/>
</dbReference>
<dbReference type="PANTHER" id="PTHR10381">
    <property type="entry name" value="ATP-DEPENDENT CLP PROTEASE PROTEOLYTIC SUBUNIT"/>
    <property type="match status" value="1"/>
</dbReference>
<dbReference type="PANTHER" id="PTHR10381:SF70">
    <property type="entry name" value="ATP-DEPENDENT CLP PROTEASE PROTEOLYTIC SUBUNIT"/>
    <property type="match status" value="1"/>
</dbReference>
<dbReference type="Pfam" id="PF00574">
    <property type="entry name" value="CLP_protease"/>
    <property type="match status" value="1"/>
</dbReference>
<dbReference type="PRINTS" id="PR00127">
    <property type="entry name" value="CLPPROTEASEP"/>
</dbReference>
<dbReference type="SUPFAM" id="SSF52096">
    <property type="entry name" value="ClpP/crotonase"/>
    <property type="match status" value="1"/>
</dbReference>
<dbReference type="PROSITE" id="PS00382">
    <property type="entry name" value="CLP_PROTEASE_HIS"/>
    <property type="match status" value="1"/>
</dbReference>
<dbReference type="PROSITE" id="PS00381">
    <property type="entry name" value="CLP_PROTEASE_SER"/>
    <property type="match status" value="1"/>
</dbReference>
<evidence type="ECO:0000255" key="1">
    <source>
        <dbReference type="HAMAP-Rule" id="MF_00444"/>
    </source>
</evidence>
<organism>
    <name type="scientific">Yersinia enterocolitica serotype O:8 / biotype 1B (strain NCTC 13174 / 8081)</name>
    <dbReference type="NCBI Taxonomy" id="393305"/>
    <lineage>
        <taxon>Bacteria</taxon>
        <taxon>Pseudomonadati</taxon>
        <taxon>Pseudomonadota</taxon>
        <taxon>Gammaproteobacteria</taxon>
        <taxon>Enterobacterales</taxon>
        <taxon>Yersiniaceae</taxon>
        <taxon>Yersinia</taxon>
    </lineage>
</organism>
<reference key="1">
    <citation type="journal article" date="2006" name="PLoS Genet.">
        <title>The complete genome sequence and comparative genome analysis of the high pathogenicity Yersinia enterocolitica strain 8081.</title>
        <authorList>
            <person name="Thomson N.R."/>
            <person name="Howard S."/>
            <person name="Wren B.W."/>
            <person name="Holden M.T.G."/>
            <person name="Crossman L."/>
            <person name="Challis G.L."/>
            <person name="Churcher C."/>
            <person name="Mungall K."/>
            <person name="Brooks K."/>
            <person name="Chillingworth T."/>
            <person name="Feltwell T."/>
            <person name="Abdellah Z."/>
            <person name="Hauser H."/>
            <person name="Jagels K."/>
            <person name="Maddison M."/>
            <person name="Moule S."/>
            <person name="Sanders M."/>
            <person name="Whitehead S."/>
            <person name="Quail M.A."/>
            <person name="Dougan G."/>
            <person name="Parkhill J."/>
            <person name="Prentice M.B."/>
        </authorList>
    </citation>
    <scope>NUCLEOTIDE SEQUENCE [LARGE SCALE GENOMIC DNA]</scope>
    <source>
        <strain>NCTC 13174 / 8081</strain>
    </source>
</reference>
<keyword id="KW-0963">Cytoplasm</keyword>
<keyword id="KW-0378">Hydrolase</keyword>
<keyword id="KW-0645">Protease</keyword>
<keyword id="KW-0720">Serine protease</keyword>
<protein>
    <recommendedName>
        <fullName evidence="1">ATP-dependent Clp protease proteolytic subunit</fullName>
        <ecNumber evidence="1">3.4.21.92</ecNumber>
    </recommendedName>
    <alternativeName>
        <fullName evidence="1">Endopeptidase Clp</fullName>
    </alternativeName>
</protein>
<feature type="chain" id="PRO_1000026145" description="ATP-dependent Clp protease proteolytic subunit">
    <location>
        <begin position="1"/>
        <end position="207"/>
    </location>
</feature>
<feature type="active site" description="Nucleophile" evidence="1">
    <location>
        <position position="111"/>
    </location>
</feature>
<feature type="active site" evidence="1">
    <location>
        <position position="136"/>
    </location>
</feature>
<gene>
    <name evidence="1" type="primary">clpP</name>
    <name type="ordered locus">YE3134</name>
</gene>
<sequence>MSYSGERDQFAPNMALVPMVVEQTSRGERSYDIFSRLLKERIIFLTGQVEDHMANLITAQMLFLEAENPEKDIFLYINSPGGVITAGMSIYDTMQFIKPDVSTICMGQACSMGAFLLTAGAKGKRFCLPNSRVMIHQPLGGFQGQATDIEIHAKEILKVKSRMNELMAKHTGKSLEEIERDTERDRFLSADEAVEYGLVDSVFTRRD</sequence>
<comment type="function">
    <text evidence="1">Cleaves peptides in various proteins in a process that requires ATP hydrolysis. Has a chymotrypsin-like activity. Plays a major role in the degradation of misfolded proteins.</text>
</comment>
<comment type="catalytic activity">
    <reaction evidence="1">
        <text>Hydrolysis of proteins to small peptides in the presence of ATP and magnesium. alpha-casein is the usual test substrate. In the absence of ATP, only oligopeptides shorter than five residues are hydrolyzed (such as succinyl-Leu-Tyr-|-NHMec, and Leu-Tyr-Leu-|-Tyr-Trp, in which cleavage of the -Tyr-|-Leu- and -Tyr-|-Trp bonds also occurs).</text>
        <dbReference type="EC" id="3.4.21.92"/>
    </reaction>
</comment>
<comment type="subunit">
    <text evidence="1">Fourteen ClpP subunits assemble into 2 heptameric rings which stack back to back to give a disk-like structure with a central cavity, resembling the structure of eukaryotic proteasomes.</text>
</comment>
<comment type="subcellular location">
    <subcellularLocation>
        <location evidence="1">Cytoplasm</location>
    </subcellularLocation>
</comment>
<comment type="similarity">
    <text evidence="1">Belongs to the peptidase S14 family.</text>
</comment>